<name>MURI_LACLM</name>
<dbReference type="EC" id="5.1.1.3" evidence="1"/>
<dbReference type="EMBL" id="AM406671">
    <property type="protein sequence ID" value="CAL97780.1"/>
    <property type="molecule type" value="Genomic_DNA"/>
</dbReference>
<dbReference type="RefSeq" id="WP_011835087.1">
    <property type="nucleotide sequence ID" value="NC_009004.1"/>
</dbReference>
<dbReference type="SMR" id="A2RKH0"/>
<dbReference type="STRING" id="416870.llmg_1187"/>
<dbReference type="GeneID" id="61109537"/>
<dbReference type="KEGG" id="llm:llmg_1187"/>
<dbReference type="eggNOG" id="COG0796">
    <property type="taxonomic scope" value="Bacteria"/>
</dbReference>
<dbReference type="HOGENOM" id="CLU_052344_0_2_9"/>
<dbReference type="OrthoDB" id="9801055at2"/>
<dbReference type="PhylomeDB" id="A2RKH0"/>
<dbReference type="UniPathway" id="UPA00219"/>
<dbReference type="Proteomes" id="UP000000364">
    <property type="component" value="Chromosome"/>
</dbReference>
<dbReference type="GO" id="GO:0008881">
    <property type="term" value="F:glutamate racemase activity"/>
    <property type="evidence" value="ECO:0007669"/>
    <property type="project" value="UniProtKB-UniRule"/>
</dbReference>
<dbReference type="GO" id="GO:0071555">
    <property type="term" value="P:cell wall organization"/>
    <property type="evidence" value="ECO:0007669"/>
    <property type="project" value="UniProtKB-KW"/>
</dbReference>
<dbReference type="GO" id="GO:0009252">
    <property type="term" value="P:peptidoglycan biosynthetic process"/>
    <property type="evidence" value="ECO:0007669"/>
    <property type="project" value="UniProtKB-UniRule"/>
</dbReference>
<dbReference type="GO" id="GO:0008360">
    <property type="term" value="P:regulation of cell shape"/>
    <property type="evidence" value="ECO:0007669"/>
    <property type="project" value="UniProtKB-KW"/>
</dbReference>
<dbReference type="FunFam" id="3.40.50.1860:FF:000002">
    <property type="entry name" value="Glutamate racemase"/>
    <property type="match status" value="1"/>
</dbReference>
<dbReference type="Gene3D" id="3.40.50.1860">
    <property type="match status" value="2"/>
</dbReference>
<dbReference type="HAMAP" id="MF_00258">
    <property type="entry name" value="Glu_racemase"/>
    <property type="match status" value="1"/>
</dbReference>
<dbReference type="InterPro" id="IPR015942">
    <property type="entry name" value="Asp/Glu/hydantoin_racemase"/>
</dbReference>
<dbReference type="InterPro" id="IPR001920">
    <property type="entry name" value="Asp/Glu_race"/>
</dbReference>
<dbReference type="InterPro" id="IPR018187">
    <property type="entry name" value="Asp/Glu_racemase_AS_1"/>
</dbReference>
<dbReference type="InterPro" id="IPR033134">
    <property type="entry name" value="Asp/Glu_racemase_AS_2"/>
</dbReference>
<dbReference type="InterPro" id="IPR004391">
    <property type="entry name" value="Glu_race"/>
</dbReference>
<dbReference type="NCBIfam" id="TIGR00067">
    <property type="entry name" value="glut_race"/>
    <property type="match status" value="1"/>
</dbReference>
<dbReference type="NCBIfam" id="NF002035">
    <property type="entry name" value="PRK00865.1-3"/>
    <property type="match status" value="1"/>
</dbReference>
<dbReference type="PANTHER" id="PTHR21198">
    <property type="entry name" value="GLUTAMATE RACEMASE"/>
    <property type="match status" value="1"/>
</dbReference>
<dbReference type="PANTHER" id="PTHR21198:SF2">
    <property type="entry name" value="GLUTAMATE RACEMASE"/>
    <property type="match status" value="1"/>
</dbReference>
<dbReference type="Pfam" id="PF01177">
    <property type="entry name" value="Asp_Glu_race"/>
    <property type="match status" value="1"/>
</dbReference>
<dbReference type="SUPFAM" id="SSF53681">
    <property type="entry name" value="Aspartate/glutamate racemase"/>
    <property type="match status" value="2"/>
</dbReference>
<dbReference type="PROSITE" id="PS00923">
    <property type="entry name" value="ASP_GLU_RACEMASE_1"/>
    <property type="match status" value="1"/>
</dbReference>
<dbReference type="PROSITE" id="PS00924">
    <property type="entry name" value="ASP_GLU_RACEMASE_2"/>
    <property type="match status" value="1"/>
</dbReference>
<protein>
    <recommendedName>
        <fullName evidence="1">Glutamate racemase</fullName>
        <ecNumber evidence="1">5.1.1.3</ecNumber>
    </recommendedName>
</protein>
<organism>
    <name type="scientific">Lactococcus lactis subsp. cremoris (strain MG1363)</name>
    <dbReference type="NCBI Taxonomy" id="416870"/>
    <lineage>
        <taxon>Bacteria</taxon>
        <taxon>Bacillati</taxon>
        <taxon>Bacillota</taxon>
        <taxon>Bacilli</taxon>
        <taxon>Lactobacillales</taxon>
        <taxon>Streptococcaceae</taxon>
        <taxon>Lactococcus</taxon>
        <taxon>Lactococcus cremoris subsp. cremoris</taxon>
    </lineage>
</organism>
<proteinExistence type="inferred from homology"/>
<gene>
    <name evidence="1" type="primary">murI</name>
    <name type="ordered locus">llmg_1187</name>
</gene>
<evidence type="ECO:0000255" key="1">
    <source>
        <dbReference type="HAMAP-Rule" id="MF_00258"/>
    </source>
</evidence>
<accession>A2RKH0</accession>
<reference key="1">
    <citation type="journal article" date="2007" name="J. Bacteriol.">
        <title>The complete genome sequence of the lactic acid bacterial paradigm Lactococcus lactis subsp. cremoris MG1363.</title>
        <authorList>
            <person name="Wegmann U."/>
            <person name="O'Connell-Motherway M."/>
            <person name="Zomer A."/>
            <person name="Buist G."/>
            <person name="Shearman C."/>
            <person name="Canchaya C."/>
            <person name="Ventura M."/>
            <person name="Goesmann A."/>
            <person name="Gasson M.J."/>
            <person name="Kuipers O.P."/>
            <person name="van Sinderen D."/>
            <person name="Kok J."/>
        </authorList>
    </citation>
    <scope>NUCLEOTIDE SEQUENCE [LARGE SCALE GENOMIC DNA]</scope>
    <source>
        <strain>MG1363</strain>
    </source>
</reference>
<keyword id="KW-0133">Cell shape</keyword>
<keyword id="KW-0961">Cell wall biogenesis/degradation</keyword>
<keyword id="KW-0413">Isomerase</keyword>
<keyword id="KW-0573">Peptidoglycan synthesis</keyword>
<sequence length="271" mass="30230">MDNRPIGLLDSGVGGLTVARELLRQLPNEEIVYIGDTRRAPYGPRSREQIIAFTWDMVNFLLSKNVKMIVMACNTATAMALEIVKEELDIPVIGVILPGASSAIQKTKTNKIGVIATQASIRSDEYHKTIARKSSAIEVLSLACPKFVSIVESNEMESEIAKRVVSESLAPLVGKIDTLILGCTHYPLLRPLIQETMGKEVRLIDSGAEAVRDISVLLNYFEINAHERKEFQHCFYTTAGVNSFREIAEKWLNIGHLHIEHAEIENFNKEK</sequence>
<feature type="chain" id="PRO_1000047577" description="Glutamate racemase">
    <location>
        <begin position="1"/>
        <end position="271"/>
    </location>
</feature>
<feature type="active site" description="Proton donor/acceptor" evidence="1">
    <location>
        <position position="73"/>
    </location>
</feature>
<feature type="active site" description="Proton donor/acceptor" evidence="1">
    <location>
        <position position="183"/>
    </location>
</feature>
<feature type="binding site" evidence="1">
    <location>
        <begin position="10"/>
        <end position="11"/>
    </location>
    <ligand>
        <name>substrate</name>
    </ligand>
</feature>
<feature type="binding site" evidence="1">
    <location>
        <begin position="42"/>
        <end position="43"/>
    </location>
    <ligand>
        <name>substrate</name>
    </ligand>
</feature>
<feature type="binding site" evidence="1">
    <location>
        <begin position="74"/>
        <end position="75"/>
    </location>
    <ligand>
        <name>substrate</name>
    </ligand>
</feature>
<feature type="binding site" evidence="1">
    <location>
        <begin position="184"/>
        <end position="185"/>
    </location>
    <ligand>
        <name>substrate</name>
    </ligand>
</feature>
<comment type="function">
    <text evidence="1">Provides the (R)-glutamate required for cell wall biosynthesis.</text>
</comment>
<comment type="catalytic activity">
    <reaction evidence="1">
        <text>L-glutamate = D-glutamate</text>
        <dbReference type="Rhea" id="RHEA:12813"/>
        <dbReference type="ChEBI" id="CHEBI:29985"/>
        <dbReference type="ChEBI" id="CHEBI:29986"/>
        <dbReference type="EC" id="5.1.1.3"/>
    </reaction>
</comment>
<comment type="pathway">
    <text evidence="1">Cell wall biogenesis; peptidoglycan biosynthesis.</text>
</comment>
<comment type="similarity">
    <text evidence="1">Belongs to the aspartate/glutamate racemases family.</text>
</comment>